<evidence type="ECO:0000255" key="1">
    <source>
        <dbReference type="PROSITE-ProRule" id="PRU00326"/>
    </source>
</evidence>
<evidence type="ECO:0000256" key="2">
    <source>
        <dbReference type="SAM" id="MobiDB-lite"/>
    </source>
</evidence>
<evidence type="ECO:0000269" key="3">
    <source>
    </source>
</evidence>
<evidence type="ECO:0000305" key="4"/>
<sequence length="517" mass="58388">MADPPHFSLFQQKFRTGDKPFLTLDADFLMNHTKVLLKSDASDKVWKVKLDGGRLSEGWEEFACDQKFRDGDVLVFKHHGDEVFHVAVVSPSVSGDIRNASSSQVITEDTYIDVDDVDDDDYGQDDEDDDDDDDEGEDNIENISEKTDKRQEADSSSDHSGFITARVTRYSLLHDRLDLSRNFTLLFGGHQKTCEIDVVDEQGRRWTMKLAKNISSGVFYIRLGWGNFCCANGLTQGDLCKFKLFQNEERPVLWLCPQESGNGRKEKRTFDEVSKGKEKKTPSPFLIVKYTPSRETTGQLSLPVSFTRNNSINKTGEVILLNQDGRKWSSYLQITGLGRGAGSEWFYLRRGWREMCEANGVGVNDSFKLELVWEGANPMFKFCSKIENHEYKGKGNQRTRKKRACETAPQPRNVKKTPRLGVEGPVYQVDEERGHTQVSNRTNTISGNLQRLLPPSCSVSDQVANVKQGIVDSLNTVRQCRTELETSEQNLQASLLAIDALGERIWGISKILSSNLV</sequence>
<organism>
    <name type="scientific">Arabidopsis thaliana</name>
    <name type="common">Mouse-ear cress</name>
    <dbReference type="NCBI Taxonomy" id="3702"/>
    <lineage>
        <taxon>Eukaryota</taxon>
        <taxon>Viridiplantae</taxon>
        <taxon>Streptophyta</taxon>
        <taxon>Embryophyta</taxon>
        <taxon>Tracheophyta</taxon>
        <taxon>Spermatophyta</taxon>
        <taxon>Magnoliopsida</taxon>
        <taxon>eudicotyledons</taxon>
        <taxon>Gunneridae</taxon>
        <taxon>Pentapetalae</taxon>
        <taxon>rosids</taxon>
        <taxon>malvids</taxon>
        <taxon>Brassicales</taxon>
        <taxon>Brassicaceae</taxon>
        <taxon>Camelineae</taxon>
        <taxon>Arabidopsis</taxon>
    </lineage>
</organism>
<comment type="function">
    <text>May play a role in flower development.</text>
</comment>
<comment type="subcellular location">
    <subcellularLocation>
        <location evidence="1 3">Nucleus</location>
    </subcellularLocation>
</comment>
<comment type="tissue specificity">
    <text evidence="3">Expressed in the shoot apical meristem (SAM), in the inflorescence apex and flowers.</text>
</comment>
<comment type="developmental stage">
    <text evidence="3">Not expressed in stage 1 flower. In stage 2 and 3 flowers, expressed in the central area of the floral dome, but not in the sepal anlagen. In stage 5 flower, restricted to the carpel anlagen. Stage 6, 7 and 8 flowers, expressed in the medial ridge. In stage 9 flower, expressed in the septum, style, and stigma. Shortly before anthesis expressed in the stigma and septum.</text>
</comment>
<comment type="sequence caution" evidence="4">
    <conflict type="erroneous gene model prediction">
        <sequence resource="EMBL-CDS" id="CAA19762"/>
    </conflict>
</comment>
<comment type="sequence caution" evidence="4">
    <conflict type="erroneous gene model prediction">
        <sequence resource="EMBL-CDS" id="CAB79879"/>
    </conflict>
</comment>
<feature type="chain" id="PRO_0000375095" description="B3 domain-containing protein REM1">
    <location>
        <begin position="1"/>
        <end position="517"/>
    </location>
</feature>
<feature type="DNA-binding region" description="TF-B3 1" evidence="1">
    <location>
        <begin position="7"/>
        <end position="92"/>
    </location>
</feature>
<feature type="DNA-binding region" description="TF-B3 2" evidence="1">
    <location>
        <begin position="162"/>
        <end position="259"/>
    </location>
</feature>
<feature type="DNA-binding region" description="TF-B3 3" evidence="1">
    <location>
        <begin position="285"/>
        <end position="385"/>
    </location>
</feature>
<feature type="region of interest" description="Disordered" evidence="2">
    <location>
        <begin position="115"/>
        <end position="158"/>
    </location>
</feature>
<feature type="region of interest" description="Disordered" evidence="2">
    <location>
        <begin position="393"/>
        <end position="415"/>
    </location>
</feature>
<feature type="compositionally biased region" description="Acidic residues" evidence="2">
    <location>
        <begin position="115"/>
        <end position="140"/>
    </location>
</feature>
<feature type="compositionally biased region" description="Basic and acidic residues" evidence="2">
    <location>
        <begin position="143"/>
        <end position="157"/>
    </location>
</feature>
<feature type="sequence conflict" description="In Ref. 1; AAK32148." evidence="4" ref="1">
    <original>L</original>
    <variation>F</variation>
    <location>
        <position position="29"/>
    </location>
</feature>
<keyword id="KW-0238">DNA-binding</keyword>
<keyword id="KW-0539">Nucleus</keyword>
<keyword id="KW-1185">Reference proteome</keyword>
<keyword id="KW-0677">Repeat</keyword>
<keyword id="KW-0804">Transcription</keyword>
<keyword id="KW-0805">Transcription regulation</keyword>
<gene>
    <name type="primary">REM1</name>
    <name type="ordered locus">At4g31610</name>
    <name type="ORF">F28M20.200</name>
</gene>
<protein>
    <recommendedName>
        <fullName>B3 domain-containing protein REM1</fullName>
    </recommendedName>
    <alternativeName>
        <fullName>Protein REPRODUCTIVE MERISTEM 1</fullName>
        <shortName>AtREM1</shortName>
    </alternativeName>
</protein>
<proteinExistence type="evidence at transcript level"/>
<accession>Q84J39</accession>
<accession>Q9ATC8</accession>
<accession>Q9SB77</accession>
<name>REM1_ARATH</name>
<reference key="1">
    <citation type="journal article" date="2002" name="Plant Physiol.">
        <title>AtREM1, a member of a new family of B3 domain-containing genes, is preferentially expressed in reproductive meristems.</title>
        <authorList>
            <person name="Franco-Zorrilla J.M."/>
            <person name="Cubas P."/>
            <person name="Jarillo J.A."/>
            <person name="Fernandez-Calvin B."/>
            <person name="Salinas J."/>
            <person name="Martinez-Zapater J.M."/>
        </authorList>
    </citation>
    <scope>NUCLEOTIDE SEQUENCE [MRNA]</scope>
    <scope>SUBCELLULAR LOCATION</scope>
    <scope>TISSUE SPECIFICITY</scope>
    <scope>DEVELOPMENTAL STAGE</scope>
    <source>
        <strain>cv. Landsberg erecta</strain>
        <tissue>Flower meristem</tissue>
    </source>
</reference>
<reference key="2">
    <citation type="journal article" date="1999" name="Nature">
        <title>Sequence and analysis of chromosome 4 of the plant Arabidopsis thaliana.</title>
        <authorList>
            <person name="Mayer K.F.X."/>
            <person name="Schueller C."/>
            <person name="Wambutt R."/>
            <person name="Murphy G."/>
            <person name="Volckaert G."/>
            <person name="Pohl T."/>
            <person name="Duesterhoeft A."/>
            <person name="Stiekema W."/>
            <person name="Entian K.-D."/>
            <person name="Terryn N."/>
            <person name="Harris B."/>
            <person name="Ansorge W."/>
            <person name="Brandt P."/>
            <person name="Grivell L.A."/>
            <person name="Rieger M."/>
            <person name="Weichselgartner M."/>
            <person name="de Simone V."/>
            <person name="Obermaier B."/>
            <person name="Mache R."/>
            <person name="Mueller M."/>
            <person name="Kreis M."/>
            <person name="Delseny M."/>
            <person name="Puigdomenech P."/>
            <person name="Watson M."/>
            <person name="Schmidtheini T."/>
            <person name="Reichert B."/>
            <person name="Portetelle D."/>
            <person name="Perez-Alonso M."/>
            <person name="Boutry M."/>
            <person name="Bancroft I."/>
            <person name="Vos P."/>
            <person name="Hoheisel J."/>
            <person name="Zimmermann W."/>
            <person name="Wedler H."/>
            <person name="Ridley P."/>
            <person name="Langham S.-A."/>
            <person name="McCullagh B."/>
            <person name="Bilham L."/>
            <person name="Robben J."/>
            <person name="van der Schueren J."/>
            <person name="Grymonprez B."/>
            <person name="Chuang Y.-J."/>
            <person name="Vandenbussche F."/>
            <person name="Braeken M."/>
            <person name="Weltjens I."/>
            <person name="Voet M."/>
            <person name="Bastiaens I."/>
            <person name="Aert R."/>
            <person name="Defoor E."/>
            <person name="Weitzenegger T."/>
            <person name="Bothe G."/>
            <person name="Ramsperger U."/>
            <person name="Hilbert H."/>
            <person name="Braun M."/>
            <person name="Holzer E."/>
            <person name="Brandt A."/>
            <person name="Peters S."/>
            <person name="van Staveren M."/>
            <person name="Dirkse W."/>
            <person name="Mooijman P."/>
            <person name="Klein Lankhorst R."/>
            <person name="Rose M."/>
            <person name="Hauf J."/>
            <person name="Koetter P."/>
            <person name="Berneiser S."/>
            <person name="Hempel S."/>
            <person name="Feldpausch M."/>
            <person name="Lamberth S."/>
            <person name="Van den Daele H."/>
            <person name="De Keyser A."/>
            <person name="Buysshaert C."/>
            <person name="Gielen J."/>
            <person name="Villarroel R."/>
            <person name="De Clercq R."/>
            <person name="van Montagu M."/>
            <person name="Rogers J."/>
            <person name="Cronin A."/>
            <person name="Quail M.A."/>
            <person name="Bray-Allen S."/>
            <person name="Clark L."/>
            <person name="Doggett J."/>
            <person name="Hall S."/>
            <person name="Kay M."/>
            <person name="Lennard N."/>
            <person name="McLay K."/>
            <person name="Mayes R."/>
            <person name="Pettett A."/>
            <person name="Rajandream M.A."/>
            <person name="Lyne M."/>
            <person name="Benes V."/>
            <person name="Rechmann S."/>
            <person name="Borkova D."/>
            <person name="Bloecker H."/>
            <person name="Scharfe M."/>
            <person name="Grimm M."/>
            <person name="Loehnert T.-H."/>
            <person name="Dose S."/>
            <person name="de Haan M."/>
            <person name="Maarse A.C."/>
            <person name="Schaefer M."/>
            <person name="Mueller-Auer S."/>
            <person name="Gabel C."/>
            <person name="Fuchs M."/>
            <person name="Fartmann B."/>
            <person name="Granderath K."/>
            <person name="Dauner D."/>
            <person name="Herzl A."/>
            <person name="Neumann S."/>
            <person name="Argiriou A."/>
            <person name="Vitale D."/>
            <person name="Liguori R."/>
            <person name="Piravandi E."/>
            <person name="Massenet O."/>
            <person name="Quigley F."/>
            <person name="Clabauld G."/>
            <person name="Muendlein A."/>
            <person name="Felber R."/>
            <person name="Schnabl S."/>
            <person name="Hiller R."/>
            <person name="Schmidt W."/>
            <person name="Lecharny A."/>
            <person name="Aubourg S."/>
            <person name="Chefdor F."/>
            <person name="Cooke R."/>
            <person name="Berger C."/>
            <person name="Monfort A."/>
            <person name="Casacuberta E."/>
            <person name="Gibbons T."/>
            <person name="Weber N."/>
            <person name="Vandenbol M."/>
            <person name="Bargues M."/>
            <person name="Terol J."/>
            <person name="Torres A."/>
            <person name="Perez-Perez A."/>
            <person name="Purnelle B."/>
            <person name="Bent E."/>
            <person name="Johnson S."/>
            <person name="Tacon D."/>
            <person name="Jesse T."/>
            <person name="Heijnen L."/>
            <person name="Schwarz S."/>
            <person name="Scholler P."/>
            <person name="Heber S."/>
            <person name="Francs P."/>
            <person name="Bielke C."/>
            <person name="Frishman D."/>
            <person name="Haase D."/>
            <person name="Lemcke K."/>
            <person name="Mewes H.-W."/>
            <person name="Stocker S."/>
            <person name="Zaccaria P."/>
            <person name="Bevan M."/>
            <person name="Wilson R.K."/>
            <person name="de la Bastide M."/>
            <person name="Habermann K."/>
            <person name="Parnell L."/>
            <person name="Dedhia N."/>
            <person name="Gnoj L."/>
            <person name="Schutz K."/>
            <person name="Huang E."/>
            <person name="Spiegel L."/>
            <person name="Sekhon M."/>
            <person name="Murray J."/>
            <person name="Sheet P."/>
            <person name="Cordes M."/>
            <person name="Abu-Threideh J."/>
            <person name="Stoneking T."/>
            <person name="Kalicki J."/>
            <person name="Graves T."/>
            <person name="Harmon G."/>
            <person name="Edwards J."/>
            <person name="Latreille P."/>
            <person name="Courtney L."/>
            <person name="Cloud J."/>
            <person name="Abbott A."/>
            <person name="Scott K."/>
            <person name="Johnson D."/>
            <person name="Minx P."/>
            <person name="Bentley D."/>
            <person name="Fulton B."/>
            <person name="Miller N."/>
            <person name="Greco T."/>
            <person name="Kemp K."/>
            <person name="Kramer J."/>
            <person name="Fulton L."/>
            <person name="Mardis E."/>
            <person name="Dante M."/>
            <person name="Pepin K."/>
            <person name="Hillier L.W."/>
            <person name="Nelson J."/>
            <person name="Spieth J."/>
            <person name="Ryan E."/>
            <person name="Andrews S."/>
            <person name="Geisel C."/>
            <person name="Layman D."/>
            <person name="Du H."/>
            <person name="Ali J."/>
            <person name="Berghoff A."/>
            <person name="Jones K."/>
            <person name="Drone K."/>
            <person name="Cotton M."/>
            <person name="Joshu C."/>
            <person name="Antonoiu B."/>
            <person name="Zidanic M."/>
            <person name="Strong C."/>
            <person name="Sun H."/>
            <person name="Lamar B."/>
            <person name="Yordan C."/>
            <person name="Ma P."/>
            <person name="Zhong J."/>
            <person name="Preston R."/>
            <person name="Vil D."/>
            <person name="Shekher M."/>
            <person name="Matero A."/>
            <person name="Shah R."/>
            <person name="Swaby I.K."/>
            <person name="O'Shaughnessy A."/>
            <person name="Rodriguez M."/>
            <person name="Hoffman J."/>
            <person name="Till S."/>
            <person name="Granat S."/>
            <person name="Shohdy N."/>
            <person name="Hasegawa A."/>
            <person name="Hameed A."/>
            <person name="Lodhi M."/>
            <person name="Johnson A."/>
            <person name="Chen E."/>
            <person name="Marra M.A."/>
            <person name="Martienssen R."/>
            <person name="McCombie W.R."/>
        </authorList>
    </citation>
    <scope>NUCLEOTIDE SEQUENCE [LARGE SCALE GENOMIC DNA]</scope>
    <source>
        <strain>cv. Columbia</strain>
    </source>
</reference>
<reference key="3">
    <citation type="journal article" date="2017" name="Plant J.">
        <title>Araport11: a complete reannotation of the Arabidopsis thaliana reference genome.</title>
        <authorList>
            <person name="Cheng C.Y."/>
            <person name="Krishnakumar V."/>
            <person name="Chan A.P."/>
            <person name="Thibaud-Nissen F."/>
            <person name="Schobel S."/>
            <person name="Town C.D."/>
        </authorList>
    </citation>
    <scope>GENOME REANNOTATION</scope>
    <source>
        <strain>cv. Columbia</strain>
    </source>
</reference>
<reference key="4">
    <citation type="journal article" date="2003" name="Science">
        <title>Empirical analysis of transcriptional activity in the Arabidopsis genome.</title>
        <authorList>
            <person name="Yamada K."/>
            <person name="Lim J."/>
            <person name="Dale J.M."/>
            <person name="Chen H."/>
            <person name="Shinn P."/>
            <person name="Palm C.J."/>
            <person name="Southwick A.M."/>
            <person name="Wu H.C."/>
            <person name="Kim C.J."/>
            <person name="Nguyen M."/>
            <person name="Pham P.K."/>
            <person name="Cheuk R.F."/>
            <person name="Karlin-Newmann G."/>
            <person name="Liu S.X."/>
            <person name="Lam B."/>
            <person name="Sakano H."/>
            <person name="Wu T."/>
            <person name="Yu G."/>
            <person name="Miranda M."/>
            <person name="Quach H.L."/>
            <person name="Tripp M."/>
            <person name="Chang C.H."/>
            <person name="Lee J.M."/>
            <person name="Toriumi M.J."/>
            <person name="Chan M.M."/>
            <person name="Tang C.C."/>
            <person name="Onodera C.S."/>
            <person name="Deng J.M."/>
            <person name="Akiyama K."/>
            <person name="Ansari Y."/>
            <person name="Arakawa T."/>
            <person name="Banh J."/>
            <person name="Banno F."/>
            <person name="Bowser L."/>
            <person name="Brooks S.Y."/>
            <person name="Carninci P."/>
            <person name="Chao Q."/>
            <person name="Choy N."/>
            <person name="Enju A."/>
            <person name="Goldsmith A.D."/>
            <person name="Gurjal M."/>
            <person name="Hansen N.F."/>
            <person name="Hayashizaki Y."/>
            <person name="Johnson-Hopson C."/>
            <person name="Hsuan V.W."/>
            <person name="Iida K."/>
            <person name="Karnes M."/>
            <person name="Khan S."/>
            <person name="Koesema E."/>
            <person name="Ishida J."/>
            <person name="Jiang P.X."/>
            <person name="Jones T."/>
            <person name="Kawai J."/>
            <person name="Kamiya A."/>
            <person name="Meyers C."/>
            <person name="Nakajima M."/>
            <person name="Narusaka M."/>
            <person name="Seki M."/>
            <person name="Sakurai T."/>
            <person name="Satou M."/>
            <person name="Tamse R."/>
            <person name="Vaysberg M."/>
            <person name="Wallender E.K."/>
            <person name="Wong C."/>
            <person name="Yamamura Y."/>
            <person name="Yuan S."/>
            <person name="Shinozaki K."/>
            <person name="Davis R.W."/>
            <person name="Theologis A."/>
            <person name="Ecker J.R."/>
        </authorList>
    </citation>
    <scope>NUCLEOTIDE SEQUENCE [LARGE SCALE MRNA]</scope>
    <source>
        <strain>cv. Columbia</strain>
    </source>
</reference>
<reference key="5">
    <citation type="journal article" date="2008" name="Trends Plant Sci.">
        <title>The plant B3 superfamily.</title>
        <authorList>
            <person name="Swaminathan K."/>
            <person name="Peterson K."/>
            <person name="Jack T."/>
        </authorList>
    </citation>
    <scope>GENE FAMILY</scope>
</reference>
<dbReference type="EMBL" id="AF336344">
    <property type="protein sequence ID" value="AAK32148.1"/>
    <property type="molecule type" value="mRNA"/>
</dbReference>
<dbReference type="EMBL" id="AL031004">
    <property type="protein sequence ID" value="CAA19762.1"/>
    <property type="status" value="ALT_SEQ"/>
    <property type="molecule type" value="Genomic_DNA"/>
</dbReference>
<dbReference type="EMBL" id="AL161579">
    <property type="protein sequence ID" value="CAB79879.1"/>
    <property type="status" value="ALT_SEQ"/>
    <property type="molecule type" value="Genomic_DNA"/>
</dbReference>
<dbReference type="EMBL" id="CP002687">
    <property type="protein sequence ID" value="AEE85936.1"/>
    <property type="molecule type" value="Genomic_DNA"/>
</dbReference>
<dbReference type="EMBL" id="BT003891">
    <property type="protein sequence ID" value="AAO41939.1"/>
    <property type="molecule type" value="mRNA"/>
</dbReference>
<dbReference type="EMBL" id="BT005002">
    <property type="protein sequence ID" value="AAO50535.1"/>
    <property type="molecule type" value="mRNA"/>
</dbReference>
<dbReference type="PIR" id="T05109">
    <property type="entry name" value="T05109"/>
</dbReference>
<dbReference type="RefSeq" id="NP_567880.1">
    <property type="nucleotide sequence ID" value="NM_119310.4"/>
</dbReference>
<dbReference type="SMR" id="Q84J39"/>
<dbReference type="STRING" id="3702.Q84J39"/>
<dbReference type="SwissPalm" id="Q84J39"/>
<dbReference type="PaxDb" id="3702-AT4G31610.1"/>
<dbReference type="ProteomicsDB" id="236882"/>
<dbReference type="EnsemblPlants" id="AT4G31610.1">
    <property type="protein sequence ID" value="AT4G31610.1"/>
    <property type="gene ID" value="AT4G31610"/>
</dbReference>
<dbReference type="GeneID" id="829288"/>
<dbReference type="Gramene" id="AT4G31610.1">
    <property type="protein sequence ID" value="AT4G31610.1"/>
    <property type="gene ID" value="AT4G31610"/>
</dbReference>
<dbReference type="KEGG" id="ath:AT4G31610"/>
<dbReference type="Araport" id="AT4G31610"/>
<dbReference type="TAIR" id="AT4G31610">
    <property type="gene designation" value="REM34"/>
</dbReference>
<dbReference type="HOGENOM" id="CLU_014437_0_0_1"/>
<dbReference type="InParanoid" id="Q84J39"/>
<dbReference type="OrthoDB" id="1072982at2759"/>
<dbReference type="PhylomeDB" id="Q84J39"/>
<dbReference type="PRO" id="PR:Q84J39"/>
<dbReference type="Proteomes" id="UP000006548">
    <property type="component" value="Chromosome 4"/>
</dbReference>
<dbReference type="ExpressionAtlas" id="Q84J39">
    <property type="expression patterns" value="baseline and differential"/>
</dbReference>
<dbReference type="GO" id="GO:0005634">
    <property type="term" value="C:nucleus"/>
    <property type="evidence" value="ECO:0000314"/>
    <property type="project" value="UniProtKB"/>
</dbReference>
<dbReference type="GO" id="GO:0003677">
    <property type="term" value="F:DNA binding"/>
    <property type="evidence" value="ECO:0007669"/>
    <property type="project" value="UniProtKB-KW"/>
</dbReference>
<dbReference type="GO" id="GO:0009908">
    <property type="term" value="P:flower development"/>
    <property type="evidence" value="ECO:0000270"/>
    <property type="project" value="UniProtKB"/>
</dbReference>
<dbReference type="GO" id="GO:0009561">
    <property type="term" value="P:megagametogenesis"/>
    <property type="evidence" value="ECO:0000316"/>
    <property type="project" value="TAIR"/>
</dbReference>
<dbReference type="GO" id="GO:0009555">
    <property type="term" value="P:pollen development"/>
    <property type="evidence" value="ECO:0000316"/>
    <property type="project" value="TAIR"/>
</dbReference>
<dbReference type="CDD" id="cd10017">
    <property type="entry name" value="B3_DNA"/>
    <property type="match status" value="3"/>
</dbReference>
<dbReference type="FunFam" id="2.40.330.10:FF:000010">
    <property type="entry name" value="B3 domain-containing protein REM1"/>
    <property type="match status" value="2"/>
</dbReference>
<dbReference type="FunFam" id="2.40.330.10:FF:000009">
    <property type="entry name" value="Transcriptional factor B3 family protein"/>
    <property type="match status" value="1"/>
</dbReference>
<dbReference type="Gene3D" id="2.40.330.10">
    <property type="entry name" value="DNA-binding pseudobarrel domain"/>
    <property type="match status" value="3"/>
</dbReference>
<dbReference type="InterPro" id="IPR003340">
    <property type="entry name" value="B3_DNA-bd"/>
</dbReference>
<dbReference type="InterPro" id="IPR015300">
    <property type="entry name" value="DNA-bd_pseudobarrel_sf"/>
</dbReference>
<dbReference type="InterPro" id="IPR039218">
    <property type="entry name" value="REM_fam"/>
</dbReference>
<dbReference type="PANTHER" id="PTHR31674">
    <property type="entry name" value="B3 DOMAIN-CONTAINING PROTEIN REM-LIKE 3-RELATED"/>
    <property type="match status" value="1"/>
</dbReference>
<dbReference type="PANTHER" id="PTHR31674:SF75">
    <property type="entry name" value="TF-B3 DOMAIN-CONTAINING PROTEIN"/>
    <property type="match status" value="1"/>
</dbReference>
<dbReference type="Pfam" id="PF02362">
    <property type="entry name" value="B3"/>
    <property type="match status" value="3"/>
</dbReference>
<dbReference type="SMART" id="SM01019">
    <property type="entry name" value="B3"/>
    <property type="match status" value="3"/>
</dbReference>
<dbReference type="SUPFAM" id="SSF101936">
    <property type="entry name" value="DNA-binding pseudobarrel domain"/>
    <property type="match status" value="3"/>
</dbReference>
<dbReference type="PROSITE" id="PS50863">
    <property type="entry name" value="B3"/>
    <property type="match status" value="3"/>
</dbReference>